<dbReference type="EC" id="1.7.6.1" evidence="8"/>
<dbReference type="EMBL" id="AY585746">
    <property type="protein sequence ID" value="AAS94228.1"/>
    <property type="molecule type" value="mRNA"/>
</dbReference>
<dbReference type="PDB" id="4XMC">
    <property type="method" value="X-ray"/>
    <property type="resolution" value="1.42 A"/>
    <property type="chains" value="A=22-205"/>
</dbReference>
<dbReference type="PDB" id="4XMD">
    <property type="method" value="X-ray"/>
    <property type="resolution" value="1.60 A"/>
    <property type="chains" value="A=22-205"/>
</dbReference>
<dbReference type="PDB" id="4XME">
    <property type="method" value="X-ray"/>
    <property type="resolution" value="1.29 A"/>
    <property type="chains" value="A=22-205"/>
</dbReference>
<dbReference type="PDB" id="4XMF">
    <property type="method" value="X-ray"/>
    <property type="resolution" value="1.60 A"/>
    <property type="chains" value="A=22-205"/>
</dbReference>
<dbReference type="PDB" id="4XMG">
    <property type="method" value="X-ray"/>
    <property type="resolution" value="1.80 A"/>
    <property type="chains" value="A=22-205"/>
</dbReference>
<dbReference type="PDB" id="4XMH">
    <property type="method" value="X-ray"/>
    <property type="resolution" value="1.29 A"/>
    <property type="chains" value="A=21-205"/>
</dbReference>
<dbReference type="PDB" id="5M6J">
    <property type="method" value="X-ray"/>
    <property type="resolution" value="1.70 A"/>
    <property type="chains" value="A=22-205"/>
</dbReference>
<dbReference type="PDB" id="5M6K">
    <property type="method" value="X-ray"/>
    <property type="resolution" value="1.60 A"/>
    <property type="chains" value="A=22-205"/>
</dbReference>
<dbReference type="PDBsum" id="4XMC"/>
<dbReference type="PDBsum" id="4XMD"/>
<dbReference type="PDBsum" id="4XME"/>
<dbReference type="PDBsum" id="4XMF"/>
<dbReference type="PDBsum" id="4XMG"/>
<dbReference type="PDBsum" id="4XMH"/>
<dbReference type="PDBsum" id="5M6J"/>
<dbReference type="PDBsum" id="5M6K"/>
<dbReference type="SMR" id="Q6PQK2"/>
<dbReference type="KEGG" id="ag:AAS94228"/>
<dbReference type="VEuPathDB" id="VectorBase:RPRC000072"/>
<dbReference type="InParanoid" id="Q6PQK2"/>
<dbReference type="BioCyc" id="MetaCyc:MONOMER-16509"/>
<dbReference type="BRENDA" id="1.7.6.1">
    <property type="organism ID" value="5379"/>
</dbReference>
<dbReference type="EvolutionaryTrace" id="Q6PQK2"/>
<dbReference type="Proteomes" id="UP000015103">
    <property type="component" value="Unassembled WGS sequence"/>
</dbReference>
<dbReference type="GO" id="GO:0005576">
    <property type="term" value="C:extracellular region"/>
    <property type="evidence" value="ECO:0000314"/>
    <property type="project" value="UniProtKB"/>
</dbReference>
<dbReference type="GO" id="GO:0051381">
    <property type="term" value="F:histamine binding"/>
    <property type="evidence" value="ECO:0000315"/>
    <property type="project" value="UniProtKB"/>
</dbReference>
<dbReference type="GO" id="GO:0046872">
    <property type="term" value="F:metal ion binding"/>
    <property type="evidence" value="ECO:0007669"/>
    <property type="project" value="UniProtKB-KW"/>
</dbReference>
<dbReference type="GO" id="GO:0070026">
    <property type="term" value="F:nitric oxide binding"/>
    <property type="evidence" value="ECO:0000315"/>
    <property type="project" value="UniProtKB"/>
</dbReference>
<dbReference type="GO" id="GO:0016491">
    <property type="term" value="F:oxidoreductase activity"/>
    <property type="evidence" value="ECO:0007669"/>
    <property type="project" value="UniProtKB-KW"/>
</dbReference>
<dbReference type="GO" id="GO:0090729">
    <property type="term" value="F:toxin activity"/>
    <property type="evidence" value="ECO:0007669"/>
    <property type="project" value="UniProtKB-KW"/>
</dbReference>
<dbReference type="GO" id="GO:0035821">
    <property type="term" value="P:modulation of process of another organism"/>
    <property type="evidence" value="ECO:0000315"/>
    <property type="project" value="UniProtKB"/>
</dbReference>
<dbReference type="GO" id="GO:0042311">
    <property type="term" value="P:vasodilation"/>
    <property type="evidence" value="ECO:0007669"/>
    <property type="project" value="UniProtKB-KW"/>
</dbReference>
<dbReference type="GO" id="GO:0035738">
    <property type="term" value="P:venom-mediated perturbation of biological process"/>
    <property type="evidence" value="ECO:0000315"/>
    <property type="project" value="UniProtKB"/>
</dbReference>
<dbReference type="CDD" id="cd19615">
    <property type="entry name" value="lipocalin_NP7"/>
    <property type="match status" value="1"/>
</dbReference>
<dbReference type="FunFam" id="2.40.128.20:FF:000055">
    <property type="entry name" value="Nitrophorin-7"/>
    <property type="match status" value="1"/>
</dbReference>
<dbReference type="Gene3D" id="2.40.128.20">
    <property type="match status" value="1"/>
</dbReference>
<dbReference type="InterPro" id="IPR012674">
    <property type="entry name" value="Calycin"/>
</dbReference>
<dbReference type="InterPro" id="IPR023613">
    <property type="entry name" value="Nitrophorin"/>
</dbReference>
<dbReference type="InterPro" id="IPR002351">
    <property type="entry name" value="Nitrophorin_domain"/>
</dbReference>
<dbReference type="Pfam" id="PF02087">
    <property type="entry name" value="Nitrophorin"/>
    <property type="match status" value="1"/>
</dbReference>
<dbReference type="PRINTS" id="PR00788">
    <property type="entry name" value="NITROPHORIN"/>
</dbReference>
<dbReference type="SUPFAM" id="SSF50814">
    <property type="entry name" value="Lipocalins"/>
    <property type="match status" value="1"/>
</dbReference>
<accession>Q6PQK2</accession>
<comment type="function">
    <text evidence="2 3 4 5 7">Converts nitrite as the sole substrate to form nitric oxide gas (NO). NO(2-) serves both as an electron donor and as an electron acceptor. Binds to negatively charged cell surfaces of activated platelets; binds to L-a-phosphatidyl-L-serine (PS)-bearing phospholipid membranes. Once bound on an activated platelet, NP7 releases its stored nitric oxide gas (NO) into the victim's tissues while feeding, resulting in vasodilation and inhibition of platelet aggregation. Also acts as an anticoagulant by blocking coagulation-factor binding sites. Has antihistamine activity; binds histamine with high affinity.</text>
</comment>
<comment type="catalytic activity">
    <reaction evidence="7 8">
        <text>3 nitrite + 2 H(+) = 2 nitric oxide + nitrate + H2O</text>
        <dbReference type="Rhea" id="RHEA:31367"/>
        <dbReference type="ChEBI" id="CHEBI:15377"/>
        <dbReference type="ChEBI" id="CHEBI:15378"/>
        <dbReference type="ChEBI" id="CHEBI:16301"/>
        <dbReference type="ChEBI" id="CHEBI:16480"/>
        <dbReference type="ChEBI" id="CHEBI:17632"/>
        <dbReference type="EC" id="1.7.6.1"/>
    </reaction>
</comment>
<comment type="cofactor">
    <cofactor evidence="7">
        <name>heme b</name>
        <dbReference type="ChEBI" id="CHEBI:60344"/>
    </cofactor>
    <text evidence="7">Binds 1 heme b (iron(II)-protoporphyrin IX) group per subunit.</text>
</comment>
<comment type="biophysicochemical properties">
    <phDependence>
        <text evidence="5">Optimum pH is 7.5.</text>
    </phDependence>
</comment>
<comment type="subunit">
    <text evidence="5 6">Forms oligomers (at pH 5.5).</text>
</comment>
<comment type="subcellular location">
    <subcellularLocation>
        <location evidence="2 4">Secreted</location>
    </subcellularLocation>
</comment>
<comment type="tissue specificity">
    <text evidence="2 4">Expressed in the endothelial cells of the salivary glands.</text>
</comment>
<comment type="similarity">
    <text evidence="1">Belongs to the calycin superfamily. Nitrophorin family.</text>
</comment>
<reference evidence="13 14" key="1">
    <citation type="journal article" date="2004" name="Biochemistry">
        <title>Recognition of anionic phospholipid membranes by an antihemostatic protein from a blood-feeding insect.</title>
        <authorList>
            <person name="Andersen J.F."/>
            <person name="Gudderra N.P."/>
            <person name="Francischetti I.M.B."/>
            <person name="Valenzuela J.G."/>
            <person name="Ribeiro J.M.C."/>
        </authorList>
    </citation>
    <scope>NUCLEOTIDE SEQUENCE [MRNA]</scope>
    <scope>FUNCTION</scope>
    <scope>SUBCELLULAR LOCATION</scope>
    <scope>TISSUE SPECIFICITY</scope>
</reference>
<reference key="2">
    <citation type="journal article" date="2005" name="J. Inorg. Biochem.">
        <title>Nitric oxide interaction with insect nitrophorins and thoughts on the electron configuration of the {FeNO}6 complex.</title>
        <authorList>
            <person name="Walker F.A."/>
        </authorList>
    </citation>
    <scope>FUNCTION</scope>
</reference>
<reference key="3">
    <citation type="journal article" date="2007" name="Biochemistry">
        <title>Spectroscopic and functional characterization of nitrophorin 7 from the blood-feeding insect Rhodnius prolixus reveals an important role of its isoform-specific N-terminus for proper protein function.</title>
        <authorList>
            <person name="Knipp M."/>
            <person name="Yang F."/>
            <person name="Berry R.E."/>
            <person name="Zhang H."/>
            <person name="Shokhirev M.N."/>
            <person name="Walker F.A."/>
        </authorList>
    </citation>
    <scope>FUNCTION</scope>
    <scope>BIOPHYSICOCHEMICAL PROPERTIES</scope>
    <scope>SUBUNIT</scope>
</reference>
<reference key="4">
    <citation type="journal article" date="2007" name="Protein Expr. Purif.">
        <title>Overexpression in Escherichia coli and functional reconstitution of the liposome binding ferriheme protein nitrophorin 7 from the bloodsucking bug Rhodnius prolixus.</title>
        <authorList>
            <person name="Knipp M."/>
            <person name="Zhang H."/>
            <person name="Berry R.E."/>
            <person name="Walker F.A."/>
        </authorList>
    </citation>
    <scope>FUNCTION</scope>
    <scope>SUBCELLULAR LOCATION</scope>
    <scope>TISSUE SPECIFICITY</scope>
</reference>
<reference key="5">
    <citation type="journal article" date="2009" name="Biochemistry">
        <title>A one-residue switch reverses the orientation of a heme b cofactor. Investigations of the ferriheme NO transporters nitrophorin 2 and 7 from the blood-feeding insect Rhodnius prolixus.</title>
        <authorList>
            <person name="Yang F."/>
            <person name="Zhang H."/>
            <person name="Knipp M."/>
        </authorList>
    </citation>
    <scope>SUBUNIT</scope>
    <scope>MUTAGENESIS OF GLU-47</scope>
</reference>
<reference key="6">
    <citation type="journal article" date="2009" name="J. Am. Chem. Soc.">
        <title>Formation of nitric oxide from nitrite by the ferriheme b protein nitrophorin 7.</title>
        <authorList>
            <person name="He C."/>
            <person name="Knipp M."/>
        </authorList>
    </citation>
    <scope>FUNCTION</scope>
    <scope>CATALYTIC ACTIVITY</scope>
    <scope>COFACTOR</scope>
</reference>
<reference key="7">
    <citation type="journal article" date="2010" name="Biochemistry">
        <title>Formation of the complex of nitrite with the ferriheme b beta-barrel proteins nitrophorin 4 and nitrophorin 7.</title>
        <authorList>
            <person name="He C."/>
            <person name="Ogata H."/>
            <person name="Knipp M."/>
        </authorList>
    </citation>
    <scope>FUNCTION</scope>
    <scope>CATALYTIC ACTIVITY</scope>
</reference>
<reference key="8">
    <citation type="journal article" date="2011" name="J. Inorg. Biochem.">
        <title>Reduction of the lipocalin type heme containing protein nitrophorin -- sensitivity of the fold-stabilizing cysteine disulfides toward routine heme-iron reduction.</title>
        <authorList>
            <person name="Knipp M."/>
            <person name="Taing J.J."/>
            <person name="He C."/>
        </authorList>
    </citation>
    <scope>DISULFIDE BOND</scope>
</reference>
<reference evidence="15 16 17 18 19 20" key="9">
    <citation type="journal article" date="2015" name="F1000Research">
        <title>Structure and dynamics of the membrane attaching nitric oxide transporter nitrophorin 7.</title>
        <authorList>
            <person name="Knipp M."/>
            <person name="Ogata H."/>
            <person name="Soavi G."/>
            <person name="Cerullo G."/>
            <person name="Allegri A."/>
            <person name="Abbruzzetti S."/>
            <person name="Bruno S."/>
            <person name="Viappiani C."/>
            <person name="Bidon-Chanal A."/>
            <person name="Luque F.J."/>
        </authorList>
    </citation>
    <scope>X-RAY CRYSTALLOGRAPHY (1.29 ANGSTROMS) OF 21-205 IN COMPLEX WITH HEME; HEME-NO; HEME-IMIDAZOLE AND HEME-HISTAMINE</scope>
    <scope>DISULFIDE BONDS</scope>
</reference>
<reference evidence="21 22" key="10">
    <citation type="journal article" date="2018" name="Sci. Rep.">
        <title>Electrostatic Tuning of the Ligand Binding Mechanism by Glu27 in Nitrophorin 7.</title>
        <authorList>
            <person name="Abbruzzetti S."/>
            <person name="Allegri A."/>
            <person name="Bidon-Chanal A."/>
            <person name="Ogata H."/>
            <person name="Soavi G."/>
            <person name="Cerullo G."/>
            <person name="Bruno S."/>
            <person name="Montali C."/>
            <person name="Luque F.J."/>
            <person name="Viappiani C."/>
        </authorList>
    </citation>
    <scope>X-RAY CRYSTALLOGRAPHY (1.6 ANGSTROMS) OF 22-205 OF MUTANT VAL-47 IN COMPLEX WITH HEME AND HEME-IMIDAZOLE</scope>
    <scope>DISULFIDE BONDS</scope>
    <scope>MUTAGENESIS OF GLU-47</scope>
</reference>
<feature type="signal peptide" evidence="1">
    <location>
        <begin position="1"/>
        <end position="20"/>
    </location>
</feature>
<feature type="chain" id="PRO_0000386434" description="Nitrophorin-7" evidence="1">
    <location>
        <begin position="21"/>
        <end position="205"/>
    </location>
</feature>
<feature type="binding site" evidence="10 18">
    <location>
        <position position="52"/>
    </location>
    <ligand>
        <name>histamine</name>
        <dbReference type="ChEBI" id="CHEBI:58432"/>
    </ligand>
</feature>
<feature type="binding site" description="proximal binding residue" evidence="10 15 16 17 18 19 20">
    <location>
        <position position="80"/>
    </location>
    <ligand>
        <name>heme</name>
        <dbReference type="ChEBI" id="CHEBI:30413"/>
    </ligand>
    <ligandPart>
        <name>Fe</name>
        <dbReference type="ChEBI" id="CHEBI:18248"/>
    </ligandPart>
</feature>
<feature type="binding site" evidence="10 15 17">
    <location>
        <position position="91"/>
    </location>
    <ligand>
        <name>heme</name>
        <dbReference type="ChEBI" id="CHEBI:30413"/>
    </ligand>
</feature>
<feature type="binding site" evidence="10 18">
    <location>
        <position position="154"/>
    </location>
    <ligand>
        <name>histamine</name>
        <dbReference type="ChEBI" id="CHEBI:58432"/>
    </ligand>
</feature>
<feature type="disulfide bond" evidence="9 10 11 15 16 17 18 19 20 21 22">
    <location>
        <begin position="25"/>
        <end position="144"/>
    </location>
</feature>
<feature type="disulfide bond" evidence="9 10 11 15 16 17 18 19 20 21 22">
    <location>
        <begin position="62"/>
        <end position="193"/>
    </location>
</feature>
<feature type="mutagenesis site" description="Results in the loss of the characteristic pH sensitivity of ligand binding." evidence="11">
    <original>E</original>
    <variation>Q</variation>
    <location>
        <position position="47"/>
    </location>
</feature>
<feature type="mutagenesis site" description="Results in the loss of the characteristic pH sensitivity of ligand binding. Reverses orientation of heme cofactor." evidence="6 11">
    <original>E</original>
    <variation>V</variation>
    <location>
        <position position="47"/>
    </location>
</feature>
<feature type="helix" evidence="23">
    <location>
        <begin position="37"/>
        <end position="40"/>
    </location>
</feature>
<feature type="strand" evidence="23">
    <location>
        <begin position="41"/>
        <end position="43"/>
    </location>
</feature>
<feature type="strand" evidence="23">
    <location>
        <begin position="45"/>
        <end position="54"/>
    </location>
</feature>
<feature type="strand" evidence="23">
    <location>
        <begin position="61"/>
        <end position="70"/>
    </location>
</feature>
<feature type="strand" evidence="23">
    <location>
        <begin position="73"/>
        <end position="82"/>
    </location>
</feature>
<feature type="turn" evidence="23">
    <location>
        <begin position="83"/>
        <end position="86"/>
    </location>
</feature>
<feature type="strand" evidence="23">
    <location>
        <begin position="87"/>
        <end position="97"/>
    </location>
</feature>
<feature type="strand" evidence="23">
    <location>
        <begin position="101"/>
        <end position="111"/>
    </location>
</feature>
<feature type="strand" evidence="23">
    <location>
        <begin position="117"/>
        <end position="119"/>
    </location>
</feature>
<feature type="strand" evidence="23">
    <location>
        <begin position="125"/>
        <end position="135"/>
    </location>
</feature>
<feature type="strand" evidence="23">
    <location>
        <begin position="138"/>
        <end position="147"/>
    </location>
</feature>
<feature type="strand" evidence="23">
    <location>
        <begin position="150"/>
        <end position="162"/>
    </location>
</feature>
<feature type="helix" evidence="23">
    <location>
        <begin position="169"/>
        <end position="177"/>
    </location>
</feature>
<feature type="helix" evidence="23">
    <location>
        <begin position="182"/>
        <end position="184"/>
    </location>
</feature>
<feature type="strand" evidence="23">
    <location>
        <begin position="185"/>
        <end position="188"/>
    </location>
</feature>
<feature type="helix" evidence="23">
    <location>
        <begin position="197"/>
        <end position="201"/>
    </location>
</feature>
<feature type="turn" evidence="23">
    <location>
        <begin position="202"/>
        <end position="204"/>
    </location>
</feature>
<protein>
    <recommendedName>
        <fullName evidence="12">Nitrophorin-7</fullName>
        <shortName evidence="12">NP7</shortName>
        <ecNumber evidence="8">1.7.6.1</ecNumber>
    </recommendedName>
    <alternativeName>
        <fullName evidence="13">Nitrite dismutase</fullName>
    </alternativeName>
</protein>
<name>NP7_RHOPR</name>
<keyword id="KW-0002">3D-structure</keyword>
<keyword id="KW-1015">Disulfide bond</keyword>
<keyword id="KW-0349">Heme</keyword>
<keyword id="KW-1199">Hemostasis impairing toxin</keyword>
<keyword id="KW-0408">Iron</keyword>
<keyword id="KW-0479">Metal-binding</keyword>
<keyword id="KW-0560">Oxidoreductase</keyword>
<keyword id="KW-1201">Platelet aggregation inhibiting toxin</keyword>
<keyword id="KW-1185">Reference proteome</keyword>
<keyword id="KW-0964">Secreted</keyword>
<keyword id="KW-0732">Signal</keyword>
<keyword id="KW-0800">Toxin</keyword>
<keyword id="KW-0838">Vasoactive</keyword>
<keyword id="KW-0840">Vasodilator</keyword>
<evidence type="ECO:0000255" key="1"/>
<evidence type="ECO:0000269" key="2">
    <source>
    </source>
</evidence>
<evidence type="ECO:0000269" key="3">
    <source>
    </source>
</evidence>
<evidence type="ECO:0000269" key="4">
    <source>
    </source>
</evidence>
<evidence type="ECO:0000269" key="5">
    <source>
    </source>
</evidence>
<evidence type="ECO:0000269" key="6">
    <source>
    </source>
</evidence>
<evidence type="ECO:0000269" key="7">
    <source>
    </source>
</evidence>
<evidence type="ECO:0000269" key="8">
    <source>
    </source>
</evidence>
<evidence type="ECO:0000269" key="9">
    <source>
    </source>
</evidence>
<evidence type="ECO:0000269" key="10">
    <source>
    </source>
</evidence>
<evidence type="ECO:0000269" key="11">
    <source>
    </source>
</evidence>
<evidence type="ECO:0000303" key="12">
    <source>
    </source>
</evidence>
<evidence type="ECO:0000305" key="13"/>
<evidence type="ECO:0000312" key="14">
    <source>
        <dbReference type="EMBL" id="AAS94228.1"/>
    </source>
</evidence>
<evidence type="ECO:0007744" key="15">
    <source>
        <dbReference type="PDB" id="4XMC"/>
    </source>
</evidence>
<evidence type="ECO:0007744" key="16">
    <source>
        <dbReference type="PDB" id="4XMD"/>
    </source>
</evidence>
<evidence type="ECO:0007744" key="17">
    <source>
        <dbReference type="PDB" id="4XME"/>
    </source>
</evidence>
<evidence type="ECO:0007744" key="18">
    <source>
        <dbReference type="PDB" id="4XMF"/>
    </source>
</evidence>
<evidence type="ECO:0007744" key="19">
    <source>
        <dbReference type="PDB" id="4XMG"/>
    </source>
</evidence>
<evidence type="ECO:0007744" key="20">
    <source>
        <dbReference type="PDB" id="4XMH"/>
    </source>
</evidence>
<evidence type="ECO:0007744" key="21">
    <source>
        <dbReference type="PDB" id="5M6J"/>
    </source>
</evidence>
<evidence type="ECO:0007744" key="22">
    <source>
        <dbReference type="PDB" id="5M6K"/>
    </source>
</evidence>
<evidence type="ECO:0007829" key="23">
    <source>
        <dbReference type="PDB" id="4XME"/>
    </source>
</evidence>
<proteinExistence type="evidence at protein level"/>
<sequence length="205" mass="22901">MELYTALLAVTILSPSSIVGLPGECSVNVIPKKNLDKAKFFSGTWYETHYLDMDPQATEKFCFSFAPRESGGTVKEALYHFNVDSKVSFYNTGTGPLESNGAKYTAKFNTVDKKGKEIKPADEKYSYTVTVIEAAKQSALIHICLQEDGKDIGDLYSVLNRNKNALPNKKIKKALNKVSLVLTKFVVTKDLDCKYDDKFLSSWQK</sequence>
<organism>
    <name type="scientific">Rhodnius prolixus</name>
    <name type="common">Triatomid bug</name>
    <dbReference type="NCBI Taxonomy" id="13249"/>
    <lineage>
        <taxon>Eukaryota</taxon>
        <taxon>Metazoa</taxon>
        <taxon>Ecdysozoa</taxon>
        <taxon>Arthropoda</taxon>
        <taxon>Hexapoda</taxon>
        <taxon>Insecta</taxon>
        <taxon>Pterygota</taxon>
        <taxon>Neoptera</taxon>
        <taxon>Paraneoptera</taxon>
        <taxon>Hemiptera</taxon>
        <taxon>Heteroptera</taxon>
        <taxon>Panheteroptera</taxon>
        <taxon>Cimicomorpha</taxon>
        <taxon>Reduviidae</taxon>
        <taxon>Triatominae</taxon>
        <taxon>Rhodnius</taxon>
    </lineage>
</organism>